<reference key="1">
    <citation type="submission" date="2007-03" db="EMBL/GenBank/DDBJ databases">
        <title>Sequencing analysis of Lobularia maritima chloroplast DNA.</title>
        <authorList>
            <person name="Hosouchi T."/>
            <person name="Tsuruoka H."/>
            <person name="Kotani H."/>
        </authorList>
    </citation>
    <scope>NUCLEOTIDE SEQUENCE [LARGE SCALE GENOMIC DNA]</scope>
</reference>
<feature type="chain" id="PRO_0000355944" description="Maturase K">
    <location>
        <begin position="1"/>
        <end position="504"/>
    </location>
</feature>
<accession>A4QLH6</accession>
<name>MATK_LOBMA</name>
<proteinExistence type="inferred from homology"/>
<gene>
    <name evidence="1" type="primary">matK</name>
</gene>
<sequence>MAKFQGYLEFDGARQQSFLYPLFFREYIYVLAYDHGLNRLNRNRSIFLENSDYGKKYSSLIVKRLILRMYEQNRLIIPTKDLNQNPFLGHTNLVDYQMISILFAVIVEIPFSLRLGSSFEGKQLKKSYNLQSIHSIFPFLEDKLSHFNYVVDVLIPYPIHLEILVQTLRYRVKDPSSLHFFRFCLYEYCNWKNFDIKKKSILNPRFFLFLYNSHVCEYESIFFFLRKRSSHLRSTSYEVLFERILFYGKIQHFLKVFVNTFPAILGLLKDPFIHYVRYHGKCILATKDTPLLMNKWKYFFVNLWQCYFSVWFQSQKVNIKQLSKDNLEFLGYLSSLRLNPLVVRSQMLENAFLIDNVRIKLDSKIPISSIIGSLAKDKFCNVLGHPISKAAWTDSSDSDILNRFVRICRNISHYYSGSSKKKNLYRIKYILRLCCVKTLARKHKSTVRAFLKRLGSGLLEEFLTGEDQVLSLIFPRSYYASKRLYRVRIWYLDILYLNDLVNHE</sequence>
<protein>
    <recommendedName>
        <fullName evidence="1">Maturase K</fullName>
    </recommendedName>
    <alternativeName>
        <fullName evidence="1">Intron maturase</fullName>
    </alternativeName>
</protein>
<geneLocation type="chloroplast"/>
<dbReference type="EMBL" id="AP009375">
    <property type="protein sequence ID" value="BAF50531.1"/>
    <property type="molecule type" value="Genomic_DNA"/>
</dbReference>
<dbReference type="RefSeq" id="YP_001123707.1">
    <property type="nucleotide sequence ID" value="NC_009274.1"/>
</dbReference>
<dbReference type="GeneID" id="4964915"/>
<dbReference type="GO" id="GO:0009507">
    <property type="term" value="C:chloroplast"/>
    <property type="evidence" value="ECO:0007669"/>
    <property type="project" value="UniProtKB-SubCell"/>
</dbReference>
<dbReference type="GO" id="GO:0003723">
    <property type="term" value="F:RNA binding"/>
    <property type="evidence" value="ECO:0007669"/>
    <property type="project" value="UniProtKB-KW"/>
</dbReference>
<dbReference type="GO" id="GO:0006397">
    <property type="term" value="P:mRNA processing"/>
    <property type="evidence" value="ECO:0007669"/>
    <property type="project" value="UniProtKB-KW"/>
</dbReference>
<dbReference type="GO" id="GO:0008380">
    <property type="term" value="P:RNA splicing"/>
    <property type="evidence" value="ECO:0007669"/>
    <property type="project" value="UniProtKB-UniRule"/>
</dbReference>
<dbReference type="GO" id="GO:0008033">
    <property type="term" value="P:tRNA processing"/>
    <property type="evidence" value="ECO:0007669"/>
    <property type="project" value="UniProtKB-KW"/>
</dbReference>
<dbReference type="HAMAP" id="MF_01390">
    <property type="entry name" value="MatK"/>
    <property type="match status" value="1"/>
</dbReference>
<dbReference type="InterPro" id="IPR024937">
    <property type="entry name" value="Domain_X"/>
</dbReference>
<dbReference type="InterPro" id="IPR002866">
    <property type="entry name" value="Maturase_MatK"/>
</dbReference>
<dbReference type="InterPro" id="IPR024942">
    <property type="entry name" value="Maturase_MatK_N"/>
</dbReference>
<dbReference type="PANTHER" id="PTHR34811">
    <property type="entry name" value="MATURASE K"/>
    <property type="match status" value="1"/>
</dbReference>
<dbReference type="PANTHER" id="PTHR34811:SF1">
    <property type="entry name" value="MATURASE K"/>
    <property type="match status" value="1"/>
</dbReference>
<dbReference type="Pfam" id="PF01348">
    <property type="entry name" value="Intron_maturas2"/>
    <property type="match status" value="1"/>
</dbReference>
<dbReference type="Pfam" id="PF01824">
    <property type="entry name" value="MatK_N"/>
    <property type="match status" value="1"/>
</dbReference>
<comment type="function">
    <text evidence="1">Usually encoded in the trnK tRNA gene intron. Probably assists in splicing its own and other chloroplast group II introns.</text>
</comment>
<comment type="subcellular location">
    <subcellularLocation>
        <location>Plastid</location>
        <location>Chloroplast</location>
    </subcellularLocation>
</comment>
<comment type="similarity">
    <text evidence="1">Belongs to the intron maturase 2 family. MatK subfamily.</text>
</comment>
<evidence type="ECO:0000255" key="1">
    <source>
        <dbReference type="HAMAP-Rule" id="MF_01390"/>
    </source>
</evidence>
<organism>
    <name type="scientific">Lobularia maritima</name>
    <name type="common">Sweet alyssum</name>
    <name type="synonym">Alyssum maritimum</name>
    <dbReference type="NCBI Taxonomy" id="226051"/>
    <lineage>
        <taxon>Eukaryota</taxon>
        <taxon>Viridiplantae</taxon>
        <taxon>Streptophyta</taxon>
        <taxon>Embryophyta</taxon>
        <taxon>Tracheophyta</taxon>
        <taxon>Spermatophyta</taxon>
        <taxon>Magnoliopsida</taxon>
        <taxon>eudicotyledons</taxon>
        <taxon>Gunneridae</taxon>
        <taxon>Pentapetalae</taxon>
        <taxon>rosids</taxon>
        <taxon>malvids</taxon>
        <taxon>Brassicales</taxon>
        <taxon>Brassicaceae</taxon>
        <taxon>Anastaticeae</taxon>
        <taxon>Lobularia</taxon>
    </lineage>
</organism>
<keyword id="KW-0150">Chloroplast</keyword>
<keyword id="KW-0507">mRNA processing</keyword>
<keyword id="KW-0934">Plastid</keyword>
<keyword id="KW-0694">RNA-binding</keyword>
<keyword id="KW-0819">tRNA processing</keyword>